<evidence type="ECO:0000255" key="1">
    <source>
        <dbReference type="HAMAP-Rule" id="MF_00815"/>
    </source>
</evidence>
<protein>
    <recommendedName>
        <fullName evidence="1">ATP synthase gamma chain</fullName>
    </recommendedName>
    <alternativeName>
        <fullName evidence="1">ATP synthase F1 sector gamma subunit</fullName>
    </alternativeName>
    <alternativeName>
        <fullName evidence="1">F-ATPase gamma subunit</fullName>
    </alternativeName>
</protein>
<gene>
    <name evidence="1" type="primary">atpG</name>
    <name type="ordered locus">YPN_3979</name>
    <name type="ORF">YP516_4515</name>
</gene>
<organism>
    <name type="scientific">Yersinia pestis bv. Antiqua (strain Nepal516)</name>
    <dbReference type="NCBI Taxonomy" id="377628"/>
    <lineage>
        <taxon>Bacteria</taxon>
        <taxon>Pseudomonadati</taxon>
        <taxon>Pseudomonadota</taxon>
        <taxon>Gammaproteobacteria</taxon>
        <taxon>Enterobacterales</taxon>
        <taxon>Yersiniaceae</taxon>
        <taxon>Yersinia</taxon>
    </lineage>
</organism>
<name>ATPG_YERPN</name>
<dbReference type="EMBL" id="CP000305">
    <property type="protein sequence ID" value="ABG20306.1"/>
    <property type="molecule type" value="Genomic_DNA"/>
</dbReference>
<dbReference type="EMBL" id="ACNQ01000019">
    <property type="protein sequence ID" value="EEO74905.1"/>
    <property type="molecule type" value="Genomic_DNA"/>
</dbReference>
<dbReference type="RefSeq" id="WP_002220756.1">
    <property type="nucleotide sequence ID" value="NZ_ACNQ01000019.1"/>
</dbReference>
<dbReference type="SMR" id="Q1CCH4"/>
<dbReference type="GeneID" id="96663460"/>
<dbReference type="KEGG" id="ypn:YPN_3979"/>
<dbReference type="HOGENOM" id="CLU_050669_0_1_6"/>
<dbReference type="Proteomes" id="UP000008936">
    <property type="component" value="Chromosome"/>
</dbReference>
<dbReference type="GO" id="GO:0005886">
    <property type="term" value="C:plasma membrane"/>
    <property type="evidence" value="ECO:0007669"/>
    <property type="project" value="UniProtKB-SubCell"/>
</dbReference>
<dbReference type="GO" id="GO:0045259">
    <property type="term" value="C:proton-transporting ATP synthase complex"/>
    <property type="evidence" value="ECO:0007669"/>
    <property type="project" value="UniProtKB-KW"/>
</dbReference>
<dbReference type="GO" id="GO:0005524">
    <property type="term" value="F:ATP binding"/>
    <property type="evidence" value="ECO:0007669"/>
    <property type="project" value="UniProtKB-UniRule"/>
</dbReference>
<dbReference type="GO" id="GO:0046933">
    <property type="term" value="F:proton-transporting ATP synthase activity, rotational mechanism"/>
    <property type="evidence" value="ECO:0007669"/>
    <property type="project" value="UniProtKB-UniRule"/>
</dbReference>
<dbReference type="GO" id="GO:0042777">
    <property type="term" value="P:proton motive force-driven plasma membrane ATP synthesis"/>
    <property type="evidence" value="ECO:0007669"/>
    <property type="project" value="UniProtKB-UniRule"/>
</dbReference>
<dbReference type="CDD" id="cd12151">
    <property type="entry name" value="F1-ATPase_gamma"/>
    <property type="match status" value="1"/>
</dbReference>
<dbReference type="FunFam" id="1.10.287.80:FF:000005">
    <property type="entry name" value="ATP synthase gamma chain"/>
    <property type="match status" value="2"/>
</dbReference>
<dbReference type="FunFam" id="3.40.1380.10:FF:000001">
    <property type="entry name" value="ATP synthase gamma chain"/>
    <property type="match status" value="1"/>
</dbReference>
<dbReference type="Gene3D" id="3.40.1380.10">
    <property type="match status" value="1"/>
</dbReference>
<dbReference type="Gene3D" id="1.10.287.80">
    <property type="entry name" value="ATP synthase, gamma subunit, helix hairpin domain"/>
    <property type="match status" value="1"/>
</dbReference>
<dbReference type="HAMAP" id="MF_00815">
    <property type="entry name" value="ATP_synth_gamma_bact"/>
    <property type="match status" value="1"/>
</dbReference>
<dbReference type="InterPro" id="IPR035968">
    <property type="entry name" value="ATP_synth_F1_ATPase_gsu"/>
</dbReference>
<dbReference type="InterPro" id="IPR000131">
    <property type="entry name" value="ATP_synth_F1_gsu"/>
</dbReference>
<dbReference type="InterPro" id="IPR023632">
    <property type="entry name" value="ATP_synth_F1_gsu_CS"/>
</dbReference>
<dbReference type="NCBIfam" id="TIGR01146">
    <property type="entry name" value="ATPsyn_F1gamma"/>
    <property type="match status" value="1"/>
</dbReference>
<dbReference type="NCBIfam" id="NF004144">
    <property type="entry name" value="PRK05621.1-1"/>
    <property type="match status" value="1"/>
</dbReference>
<dbReference type="PANTHER" id="PTHR11693">
    <property type="entry name" value="ATP SYNTHASE GAMMA CHAIN"/>
    <property type="match status" value="1"/>
</dbReference>
<dbReference type="PANTHER" id="PTHR11693:SF22">
    <property type="entry name" value="ATP SYNTHASE SUBUNIT GAMMA, MITOCHONDRIAL"/>
    <property type="match status" value="1"/>
</dbReference>
<dbReference type="Pfam" id="PF00231">
    <property type="entry name" value="ATP-synt"/>
    <property type="match status" value="1"/>
</dbReference>
<dbReference type="PRINTS" id="PR00126">
    <property type="entry name" value="ATPASEGAMMA"/>
</dbReference>
<dbReference type="SUPFAM" id="SSF52943">
    <property type="entry name" value="ATP synthase (F1-ATPase), gamma subunit"/>
    <property type="match status" value="1"/>
</dbReference>
<dbReference type="PROSITE" id="PS00153">
    <property type="entry name" value="ATPASE_GAMMA"/>
    <property type="match status" value="1"/>
</dbReference>
<keyword id="KW-0066">ATP synthesis</keyword>
<keyword id="KW-0997">Cell inner membrane</keyword>
<keyword id="KW-1003">Cell membrane</keyword>
<keyword id="KW-0139">CF(1)</keyword>
<keyword id="KW-0375">Hydrogen ion transport</keyword>
<keyword id="KW-0406">Ion transport</keyword>
<keyword id="KW-0472">Membrane</keyword>
<keyword id="KW-0813">Transport</keyword>
<reference key="1">
    <citation type="journal article" date="2006" name="J. Bacteriol.">
        <title>Complete genome sequence of Yersinia pestis strains Antiqua and Nepal516: evidence of gene reduction in an emerging pathogen.</title>
        <authorList>
            <person name="Chain P.S.G."/>
            <person name="Hu P."/>
            <person name="Malfatti S.A."/>
            <person name="Radnedge L."/>
            <person name="Larimer F."/>
            <person name="Vergez L.M."/>
            <person name="Worsham P."/>
            <person name="Chu M.C."/>
            <person name="Andersen G.L."/>
        </authorList>
    </citation>
    <scope>NUCLEOTIDE SEQUENCE [LARGE SCALE GENOMIC DNA]</scope>
    <source>
        <strain>Nepal516</strain>
    </source>
</reference>
<reference key="2">
    <citation type="submission" date="2009-04" db="EMBL/GenBank/DDBJ databases">
        <title>Yersinia pestis Nepal516A whole genome shotgun sequencing project.</title>
        <authorList>
            <person name="Plunkett G. III"/>
            <person name="Anderson B.D."/>
            <person name="Baumler D.J."/>
            <person name="Burland V."/>
            <person name="Cabot E.L."/>
            <person name="Glasner J.D."/>
            <person name="Mau B."/>
            <person name="Neeno-Eckwall E."/>
            <person name="Perna N.T."/>
            <person name="Munk A.C."/>
            <person name="Tapia R."/>
            <person name="Green L.D."/>
            <person name="Rogers Y.C."/>
            <person name="Detter J.C."/>
            <person name="Bruce D.C."/>
            <person name="Brettin T.S."/>
        </authorList>
    </citation>
    <scope>NUCLEOTIDE SEQUENCE [LARGE SCALE GENOMIC DNA]</scope>
    <source>
        <strain>Nepal516</strain>
    </source>
</reference>
<proteinExistence type="inferred from homology"/>
<accession>Q1CCH4</accession>
<accession>D1Q302</accession>
<feature type="chain" id="PRO_1000053379" description="ATP synthase gamma chain">
    <location>
        <begin position="1"/>
        <end position="287"/>
    </location>
</feature>
<sequence length="287" mass="31578">MAGAKEIRSKIASVQNTQKITKAMEMVAASKMRKSQERMAASRPYAETMRSVIGHLALGNLEYKHPYLEERDVKRVGYLVVSTDRGLCGGLNINLFKRLLAEMKGWSEKGVECDLALIGSKAASFFGSVGGKIVAQVTGMGDNPSLSELIGPVKVMLQAYDEGRLDKLYIVNNKFINTMSQEPRIMQLLPLPPAEDGELKKKSWDYLYEPDPKALLDTLLRRYVESQVYQGVVENLASEQAARMVAMKAATDNGGSLIKELQLVYNKARQASITQELTEIVGGASAV</sequence>
<comment type="function">
    <text evidence="1">Produces ATP from ADP in the presence of a proton gradient across the membrane. The gamma chain is believed to be important in regulating ATPase activity and the flow of protons through the CF(0) complex.</text>
</comment>
<comment type="subunit">
    <text evidence="1">F-type ATPases have 2 components, CF(1) - the catalytic core - and CF(0) - the membrane proton channel. CF(1) has five subunits: alpha(3), beta(3), gamma(1), delta(1), epsilon(1). CF(0) has three main subunits: a, b and c.</text>
</comment>
<comment type="subcellular location">
    <subcellularLocation>
        <location evidence="1">Cell inner membrane</location>
        <topology evidence="1">Peripheral membrane protein</topology>
    </subcellularLocation>
</comment>
<comment type="similarity">
    <text evidence="1">Belongs to the ATPase gamma chain family.</text>
</comment>